<protein>
    <recommendedName>
        <fullName>Germin-like protein subfamily 2 member 4</fullName>
    </recommendedName>
</protein>
<dbReference type="EMBL" id="AL138642">
    <property type="protein sequence ID" value="CAB71909.1"/>
    <property type="molecule type" value="Genomic_DNA"/>
</dbReference>
<dbReference type="EMBL" id="CP002686">
    <property type="protein sequence ID" value="AEE80296.1"/>
    <property type="molecule type" value="Genomic_DNA"/>
</dbReference>
<dbReference type="EMBL" id="U95036">
    <property type="protein sequence ID" value="AAB51752.1"/>
    <property type="molecule type" value="mRNA"/>
</dbReference>
<dbReference type="PIR" id="T47994">
    <property type="entry name" value="T47994"/>
</dbReference>
<dbReference type="RefSeq" id="NP_191761.1">
    <molecule id="Q9M263-1"/>
    <property type="nucleotide sequence ID" value="NM_116067.4"/>
</dbReference>
<dbReference type="SMR" id="Q9M263"/>
<dbReference type="FunCoup" id="Q9M263">
    <property type="interactions" value="60"/>
</dbReference>
<dbReference type="STRING" id="3702.Q9M263"/>
<dbReference type="GlyCosmos" id="Q9M263">
    <property type="glycosylation" value="2 sites, No reported glycans"/>
</dbReference>
<dbReference type="GlyGen" id="Q9M263">
    <property type="glycosylation" value="2 sites"/>
</dbReference>
<dbReference type="PaxDb" id="3702-AT3G62020.1"/>
<dbReference type="ProteomicsDB" id="248580">
    <molecule id="Q9M263-1"/>
</dbReference>
<dbReference type="EnsemblPlants" id="AT3G62020.1">
    <molecule id="Q9M263-1"/>
    <property type="protein sequence ID" value="AT3G62020.1"/>
    <property type="gene ID" value="AT3G62020"/>
</dbReference>
<dbReference type="GeneID" id="825375"/>
<dbReference type="Gramene" id="AT3G62020.1">
    <molecule id="Q9M263-1"/>
    <property type="protein sequence ID" value="AT3G62020.1"/>
    <property type="gene ID" value="AT3G62020"/>
</dbReference>
<dbReference type="KEGG" id="ath:AT3G62020"/>
<dbReference type="Araport" id="AT3G62020"/>
<dbReference type="TAIR" id="AT3G62020">
    <property type="gene designation" value="GLP10"/>
</dbReference>
<dbReference type="eggNOG" id="ENOG502QQ4A">
    <property type="taxonomic scope" value="Eukaryota"/>
</dbReference>
<dbReference type="InParanoid" id="Q9M263"/>
<dbReference type="OrthoDB" id="1921208at2759"/>
<dbReference type="PhylomeDB" id="Q9M263"/>
<dbReference type="PRO" id="PR:Q9M263"/>
<dbReference type="Proteomes" id="UP000006548">
    <property type="component" value="Chromosome 3"/>
</dbReference>
<dbReference type="ExpressionAtlas" id="Q9M263">
    <property type="expression patterns" value="baseline and differential"/>
</dbReference>
<dbReference type="GO" id="GO:0048046">
    <property type="term" value="C:apoplast"/>
    <property type="evidence" value="ECO:0007669"/>
    <property type="project" value="UniProtKB-SubCell"/>
</dbReference>
<dbReference type="GO" id="GO:0009505">
    <property type="term" value="C:plant-type cell wall"/>
    <property type="evidence" value="ECO:0007005"/>
    <property type="project" value="TAIR"/>
</dbReference>
<dbReference type="GO" id="GO:0030145">
    <property type="term" value="F:manganese ion binding"/>
    <property type="evidence" value="ECO:0007669"/>
    <property type="project" value="InterPro"/>
</dbReference>
<dbReference type="CDD" id="cd02241">
    <property type="entry name" value="cupin_OxOx"/>
    <property type="match status" value="1"/>
</dbReference>
<dbReference type="FunFam" id="2.60.120.10:FF:000025">
    <property type="entry name" value="germin-like protein subfamily 2 member 1"/>
    <property type="match status" value="1"/>
</dbReference>
<dbReference type="Gene3D" id="2.60.120.10">
    <property type="entry name" value="Jelly Rolls"/>
    <property type="match status" value="1"/>
</dbReference>
<dbReference type="InterPro" id="IPR006045">
    <property type="entry name" value="Cupin_1"/>
</dbReference>
<dbReference type="InterPro" id="IPR001929">
    <property type="entry name" value="Germin"/>
</dbReference>
<dbReference type="InterPro" id="IPR019780">
    <property type="entry name" value="Germin_Mn-BS"/>
</dbReference>
<dbReference type="InterPro" id="IPR014710">
    <property type="entry name" value="RmlC-like_jellyroll"/>
</dbReference>
<dbReference type="InterPro" id="IPR011051">
    <property type="entry name" value="RmlC_Cupin_sf"/>
</dbReference>
<dbReference type="PANTHER" id="PTHR31238">
    <property type="entry name" value="GERMIN-LIKE PROTEIN SUBFAMILY 3 MEMBER 3"/>
    <property type="match status" value="1"/>
</dbReference>
<dbReference type="Pfam" id="PF00190">
    <property type="entry name" value="Cupin_1"/>
    <property type="match status" value="1"/>
</dbReference>
<dbReference type="PRINTS" id="PR00325">
    <property type="entry name" value="GERMIN"/>
</dbReference>
<dbReference type="SMART" id="SM00835">
    <property type="entry name" value="Cupin_1"/>
    <property type="match status" value="1"/>
</dbReference>
<dbReference type="SUPFAM" id="SSF51182">
    <property type="entry name" value="RmlC-like cupins"/>
    <property type="match status" value="1"/>
</dbReference>
<dbReference type="PROSITE" id="PS00725">
    <property type="entry name" value="GERMIN"/>
    <property type="match status" value="1"/>
</dbReference>
<organism>
    <name type="scientific">Arabidopsis thaliana</name>
    <name type="common">Mouse-ear cress</name>
    <dbReference type="NCBI Taxonomy" id="3702"/>
    <lineage>
        <taxon>Eukaryota</taxon>
        <taxon>Viridiplantae</taxon>
        <taxon>Streptophyta</taxon>
        <taxon>Embryophyta</taxon>
        <taxon>Tracheophyta</taxon>
        <taxon>Spermatophyta</taxon>
        <taxon>Magnoliopsida</taxon>
        <taxon>eudicotyledons</taxon>
        <taxon>Gunneridae</taxon>
        <taxon>Pentapetalae</taxon>
        <taxon>rosids</taxon>
        <taxon>malvids</taxon>
        <taxon>Brassicales</taxon>
        <taxon>Brassicaceae</taxon>
        <taxon>Camelineae</taxon>
        <taxon>Arabidopsis</taxon>
    </lineage>
</organism>
<name>GL24_ARATH</name>
<reference key="1">
    <citation type="journal article" date="2000" name="Nature">
        <title>Sequence and analysis of chromosome 3 of the plant Arabidopsis thaliana.</title>
        <authorList>
            <person name="Salanoubat M."/>
            <person name="Lemcke K."/>
            <person name="Rieger M."/>
            <person name="Ansorge W."/>
            <person name="Unseld M."/>
            <person name="Fartmann B."/>
            <person name="Valle G."/>
            <person name="Bloecker H."/>
            <person name="Perez-Alonso M."/>
            <person name="Obermaier B."/>
            <person name="Delseny M."/>
            <person name="Boutry M."/>
            <person name="Grivell L.A."/>
            <person name="Mache R."/>
            <person name="Puigdomenech P."/>
            <person name="De Simone V."/>
            <person name="Choisne N."/>
            <person name="Artiguenave F."/>
            <person name="Robert C."/>
            <person name="Brottier P."/>
            <person name="Wincker P."/>
            <person name="Cattolico L."/>
            <person name="Weissenbach J."/>
            <person name="Saurin W."/>
            <person name="Quetier F."/>
            <person name="Schaefer M."/>
            <person name="Mueller-Auer S."/>
            <person name="Gabel C."/>
            <person name="Fuchs M."/>
            <person name="Benes V."/>
            <person name="Wurmbach E."/>
            <person name="Drzonek H."/>
            <person name="Erfle H."/>
            <person name="Jordan N."/>
            <person name="Bangert S."/>
            <person name="Wiedelmann R."/>
            <person name="Kranz H."/>
            <person name="Voss H."/>
            <person name="Holland R."/>
            <person name="Brandt P."/>
            <person name="Nyakatura G."/>
            <person name="Vezzi A."/>
            <person name="D'Angelo M."/>
            <person name="Pallavicini A."/>
            <person name="Toppo S."/>
            <person name="Simionati B."/>
            <person name="Conrad A."/>
            <person name="Hornischer K."/>
            <person name="Kauer G."/>
            <person name="Loehnert T.-H."/>
            <person name="Nordsiek G."/>
            <person name="Reichelt J."/>
            <person name="Scharfe M."/>
            <person name="Schoen O."/>
            <person name="Bargues M."/>
            <person name="Terol J."/>
            <person name="Climent J."/>
            <person name="Navarro P."/>
            <person name="Collado C."/>
            <person name="Perez-Perez A."/>
            <person name="Ottenwaelder B."/>
            <person name="Duchemin D."/>
            <person name="Cooke R."/>
            <person name="Laudie M."/>
            <person name="Berger-Llauro C."/>
            <person name="Purnelle B."/>
            <person name="Masuy D."/>
            <person name="de Haan M."/>
            <person name="Maarse A.C."/>
            <person name="Alcaraz J.-P."/>
            <person name="Cottet A."/>
            <person name="Casacuberta E."/>
            <person name="Monfort A."/>
            <person name="Argiriou A."/>
            <person name="Flores M."/>
            <person name="Liguori R."/>
            <person name="Vitale D."/>
            <person name="Mannhaupt G."/>
            <person name="Haase D."/>
            <person name="Schoof H."/>
            <person name="Rudd S."/>
            <person name="Zaccaria P."/>
            <person name="Mewes H.-W."/>
            <person name="Mayer K.F.X."/>
            <person name="Kaul S."/>
            <person name="Town C.D."/>
            <person name="Koo H.L."/>
            <person name="Tallon L.J."/>
            <person name="Jenkins J."/>
            <person name="Rooney T."/>
            <person name="Rizzo M."/>
            <person name="Walts A."/>
            <person name="Utterback T."/>
            <person name="Fujii C.Y."/>
            <person name="Shea T.P."/>
            <person name="Creasy T.H."/>
            <person name="Haas B."/>
            <person name="Maiti R."/>
            <person name="Wu D."/>
            <person name="Peterson J."/>
            <person name="Van Aken S."/>
            <person name="Pai G."/>
            <person name="Militscher J."/>
            <person name="Sellers P."/>
            <person name="Gill J.E."/>
            <person name="Feldblyum T.V."/>
            <person name="Preuss D."/>
            <person name="Lin X."/>
            <person name="Nierman W.C."/>
            <person name="Salzberg S.L."/>
            <person name="White O."/>
            <person name="Venter J.C."/>
            <person name="Fraser C.M."/>
            <person name="Kaneko T."/>
            <person name="Nakamura Y."/>
            <person name="Sato S."/>
            <person name="Kato T."/>
            <person name="Asamizu E."/>
            <person name="Sasamoto S."/>
            <person name="Kimura T."/>
            <person name="Idesawa K."/>
            <person name="Kawashima K."/>
            <person name="Kishida Y."/>
            <person name="Kiyokawa C."/>
            <person name="Kohara M."/>
            <person name="Matsumoto M."/>
            <person name="Matsuno A."/>
            <person name="Muraki A."/>
            <person name="Nakayama S."/>
            <person name="Nakazaki N."/>
            <person name="Shinpo S."/>
            <person name="Takeuchi C."/>
            <person name="Wada T."/>
            <person name="Watanabe A."/>
            <person name="Yamada M."/>
            <person name="Yasuda M."/>
            <person name="Tabata S."/>
        </authorList>
    </citation>
    <scope>NUCLEOTIDE SEQUENCE [LARGE SCALE GENOMIC DNA]</scope>
    <source>
        <strain>cv. Columbia</strain>
    </source>
</reference>
<reference key="2">
    <citation type="journal article" date="2017" name="Plant J.">
        <title>Araport11: a complete reannotation of the Arabidopsis thaliana reference genome.</title>
        <authorList>
            <person name="Cheng C.Y."/>
            <person name="Krishnakumar V."/>
            <person name="Chan A.P."/>
            <person name="Thibaud-Nissen F."/>
            <person name="Schobel S."/>
            <person name="Town C.D."/>
        </authorList>
    </citation>
    <scope>GENOME REANNOTATION</scope>
    <source>
        <strain>cv. Columbia</strain>
    </source>
</reference>
<reference key="3">
    <citation type="journal article" date="1998" name="Plant Mol. Biol.">
        <title>Arabidopsis thaliana contains a large family of germin-like proteins: characterization of cDNA and genomic sequences encoding 12 unique family members.</title>
        <authorList>
            <person name="Carter C."/>
            <person name="Graham R.A."/>
            <person name="Thornburg R.W."/>
        </authorList>
    </citation>
    <scope>NUCLEOTIDE SEQUENCE [MRNA] OF 17-220</scope>
    <source>
        <strain>cv. Columbia</strain>
    </source>
</reference>
<evidence type="ECO:0000250" key="1"/>
<evidence type="ECO:0000255" key="2"/>
<evidence type="ECO:0000305" key="3"/>
<accession>Q9M263</accession>
<accession>O04352</accession>
<sequence>MDSRCFGFFFTLLSLNVIVLAYDPDTLQDLCVADRTSGIKVNGFTCKPESNITASDFFFAGIGKPAVVNNTVGSAVTGANVEKIAGLNTLGVSLARIDYAPGGLNPPHTHPRATEVIFVLEGELDVGFITTANKLFAKTVKKGEVFVFPRGLIHYQKNNDKAKPASVISAFNSQLPGTQSIAATLFTATPAIPDHVLTTTFQIGTKEIEKIKSKFAPKKV</sequence>
<keyword id="KW-0025">Alternative splicing</keyword>
<keyword id="KW-0052">Apoplast</keyword>
<keyword id="KW-1015">Disulfide bond</keyword>
<keyword id="KW-0325">Glycoprotein</keyword>
<keyword id="KW-0464">Manganese</keyword>
<keyword id="KW-0479">Metal-binding</keyword>
<keyword id="KW-1185">Reference proteome</keyword>
<keyword id="KW-0964">Secreted</keyword>
<keyword id="KW-0732">Signal</keyword>
<comment type="function">
    <text>May play a role in plant defense. Probably has no oxalate oxidase activity even if the active site is conserved.</text>
</comment>
<comment type="subunit">
    <text evidence="1">Oligomer (believed to be a pentamer but probably hexamer).</text>
</comment>
<comment type="subcellular location">
    <subcellularLocation>
        <location evidence="1">Secreted</location>
        <location evidence="1">Extracellular space</location>
        <location evidence="1">Apoplast</location>
    </subcellularLocation>
</comment>
<comment type="alternative products">
    <event type="alternative splicing"/>
    <isoform>
        <id>Q9M263-1</id>
        <name>1</name>
        <sequence type="displayed"/>
    </isoform>
    <text>A number of isoforms are produced. According to EST sequences.</text>
</comment>
<comment type="similarity">
    <text evidence="3">Belongs to the germin family.</text>
</comment>
<gene>
    <name type="primary">GLP10</name>
    <name type="ordered locus">At3g62020</name>
    <name type="ORF">F21F14.190</name>
</gene>
<proteinExistence type="evidence at transcript level"/>
<feature type="signal peptide" evidence="2">
    <location>
        <begin position="1"/>
        <end position="21"/>
    </location>
</feature>
<feature type="chain" id="PRO_0000010824" description="Germin-like protein subfamily 2 member 4">
    <location>
        <begin position="22"/>
        <end position="220"/>
    </location>
</feature>
<feature type="domain" description="Cupin type-1" evidence="2">
    <location>
        <begin position="58"/>
        <end position="209"/>
    </location>
</feature>
<feature type="binding site" evidence="1">
    <location>
        <position position="108"/>
    </location>
    <ligand>
        <name>Mn(2+)</name>
        <dbReference type="ChEBI" id="CHEBI:29035"/>
    </ligand>
</feature>
<feature type="binding site" evidence="1">
    <location>
        <position position="110"/>
    </location>
    <ligand>
        <name>Mn(2+)</name>
        <dbReference type="ChEBI" id="CHEBI:29035"/>
    </ligand>
</feature>
<feature type="binding site" evidence="1">
    <location>
        <position position="115"/>
    </location>
    <ligand>
        <name>Mn(2+)</name>
        <dbReference type="ChEBI" id="CHEBI:29035"/>
    </ligand>
</feature>
<feature type="binding site" evidence="1">
    <location>
        <position position="154"/>
    </location>
    <ligand>
        <name>Mn(2+)</name>
        <dbReference type="ChEBI" id="CHEBI:29035"/>
    </ligand>
</feature>
<feature type="glycosylation site" description="N-linked (GlcNAc...) asparagine" evidence="2">
    <location>
        <position position="51"/>
    </location>
</feature>
<feature type="glycosylation site" description="N-linked (GlcNAc...) asparagine" evidence="2">
    <location>
        <position position="69"/>
    </location>
</feature>
<feature type="disulfide bond" evidence="1">
    <location>
        <begin position="31"/>
        <end position="46"/>
    </location>
</feature>